<gene>
    <name evidence="1" type="primary">mntP</name>
    <name type="ordered locus">Moth_2394</name>
</gene>
<organism>
    <name type="scientific">Moorella thermoacetica (strain ATCC 39073 / JCM 9320)</name>
    <dbReference type="NCBI Taxonomy" id="264732"/>
    <lineage>
        <taxon>Bacteria</taxon>
        <taxon>Bacillati</taxon>
        <taxon>Bacillota</taxon>
        <taxon>Clostridia</taxon>
        <taxon>Moorellales</taxon>
        <taxon>Moorellaceae</taxon>
        <taxon>Moorella</taxon>
    </lineage>
</organism>
<comment type="function">
    <text evidence="1">Probably functions as a manganese efflux pump.</text>
</comment>
<comment type="subcellular location">
    <subcellularLocation>
        <location evidence="1">Cell membrane</location>
        <topology evidence="1">Multi-pass membrane protein</topology>
    </subcellularLocation>
</comment>
<comment type="similarity">
    <text evidence="1">Belongs to the MntP (TC 9.B.29) family.</text>
</comment>
<feature type="chain" id="PRO_0000296931" description="Putative manganese efflux pump MntP">
    <location>
        <begin position="1"/>
        <end position="194"/>
    </location>
</feature>
<feature type="transmembrane region" description="Helical" evidence="1">
    <location>
        <begin position="6"/>
        <end position="26"/>
    </location>
</feature>
<feature type="transmembrane region" description="Helical" evidence="1">
    <location>
        <begin position="35"/>
        <end position="55"/>
    </location>
</feature>
<feature type="transmembrane region" description="Helical" evidence="1">
    <location>
        <begin position="66"/>
        <end position="86"/>
    </location>
</feature>
<feature type="transmembrane region" description="Helical" evidence="1">
    <location>
        <begin position="109"/>
        <end position="129"/>
    </location>
</feature>
<feature type="transmembrane region" description="Helical" evidence="1">
    <location>
        <begin position="142"/>
        <end position="162"/>
    </location>
</feature>
<feature type="transmembrane region" description="Helical" evidence="1">
    <location>
        <begin position="174"/>
        <end position="194"/>
    </location>
</feature>
<accession>Q2RFW3</accession>
<evidence type="ECO:0000255" key="1">
    <source>
        <dbReference type="HAMAP-Rule" id="MF_01521"/>
    </source>
</evidence>
<proteinExistence type="inferred from homology"/>
<protein>
    <recommendedName>
        <fullName evidence="1">Putative manganese efflux pump MntP</fullName>
    </recommendedName>
</protein>
<sequence>MEPLGLILVAVALGTDAFSLATGLALGGFRGRQAWLFAGTVGLFHIFMPLAGLYLGLLLGRLLGKVAAIIGALVLATMGTLMLWEAYNNRRQGGSMVGQVLRVIPGRGGVLGGVMAILFMAGSVSLDALSVGFGLGAISVNVPLTVLTMGFIAATMTALGLLAGRRLGSFFGNRAELAGGLILVAIGLKMLVGV</sequence>
<reference key="1">
    <citation type="journal article" date="2008" name="Environ. Microbiol.">
        <title>The complete genome sequence of Moorella thermoacetica (f. Clostridium thermoaceticum).</title>
        <authorList>
            <person name="Pierce E."/>
            <person name="Xie G."/>
            <person name="Barabote R.D."/>
            <person name="Saunders E."/>
            <person name="Han C.S."/>
            <person name="Detter J.C."/>
            <person name="Richardson P."/>
            <person name="Brettin T.S."/>
            <person name="Das A."/>
            <person name="Ljungdahl L.G."/>
            <person name="Ragsdale S.W."/>
        </authorList>
    </citation>
    <scope>NUCLEOTIDE SEQUENCE [LARGE SCALE GENOMIC DNA]</scope>
    <source>
        <strain>ATCC 39073 / JCM 9320</strain>
    </source>
</reference>
<keyword id="KW-1003">Cell membrane</keyword>
<keyword id="KW-0406">Ion transport</keyword>
<keyword id="KW-0464">Manganese</keyword>
<keyword id="KW-0472">Membrane</keyword>
<keyword id="KW-0812">Transmembrane</keyword>
<keyword id="KW-1133">Transmembrane helix</keyword>
<keyword id="KW-0813">Transport</keyword>
<dbReference type="EMBL" id="CP000232">
    <property type="protein sequence ID" value="ABC20676.1"/>
    <property type="molecule type" value="Genomic_DNA"/>
</dbReference>
<dbReference type="RefSeq" id="YP_431219.1">
    <property type="nucleotide sequence ID" value="NC_007644.1"/>
</dbReference>
<dbReference type="STRING" id="264732.Moth_2394"/>
<dbReference type="EnsemblBacteria" id="ABC20676">
    <property type="protein sequence ID" value="ABC20676"/>
    <property type="gene ID" value="Moth_2394"/>
</dbReference>
<dbReference type="KEGG" id="mta:Moth_2394"/>
<dbReference type="PATRIC" id="fig|264732.11.peg.2607"/>
<dbReference type="eggNOG" id="COG1971">
    <property type="taxonomic scope" value="Bacteria"/>
</dbReference>
<dbReference type="HOGENOM" id="CLU_096410_1_1_9"/>
<dbReference type="OrthoDB" id="1679700at2"/>
<dbReference type="GO" id="GO:0005886">
    <property type="term" value="C:plasma membrane"/>
    <property type="evidence" value="ECO:0007669"/>
    <property type="project" value="UniProtKB-SubCell"/>
</dbReference>
<dbReference type="GO" id="GO:0005384">
    <property type="term" value="F:manganese ion transmembrane transporter activity"/>
    <property type="evidence" value="ECO:0007669"/>
    <property type="project" value="UniProtKB-UniRule"/>
</dbReference>
<dbReference type="HAMAP" id="MF_01521">
    <property type="entry name" value="MntP_pump"/>
    <property type="match status" value="1"/>
</dbReference>
<dbReference type="InterPro" id="IPR003810">
    <property type="entry name" value="Mntp/YtaF"/>
</dbReference>
<dbReference type="InterPro" id="IPR022929">
    <property type="entry name" value="Put_MntP"/>
</dbReference>
<dbReference type="PANTHER" id="PTHR35529">
    <property type="entry name" value="MANGANESE EFFLUX PUMP MNTP-RELATED"/>
    <property type="match status" value="1"/>
</dbReference>
<dbReference type="PANTHER" id="PTHR35529:SF1">
    <property type="entry name" value="MANGANESE EFFLUX PUMP MNTP-RELATED"/>
    <property type="match status" value="1"/>
</dbReference>
<dbReference type="Pfam" id="PF02659">
    <property type="entry name" value="Mntp"/>
    <property type="match status" value="1"/>
</dbReference>
<name>MNTP_MOOTA</name>